<organism>
    <name type="scientific">Saccharomyces cerevisiae (strain ATCC 204508 / S288c)</name>
    <name type="common">Baker's yeast</name>
    <dbReference type="NCBI Taxonomy" id="559292"/>
    <lineage>
        <taxon>Eukaryota</taxon>
        <taxon>Fungi</taxon>
        <taxon>Dikarya</taxon>
        <taxon>Ascomycota</taxon>
        <taxon>Saccharomycotina</taxon>
        <taxon>Saccharomycetes</taxon>
        <taxon>Saccharomycetales</taxon>
        <taxon>Saccharomycetaceae</taxon>
        <taxon>Saccharomyces</taxon>
    </lineage>
</organism>
<dbReference type="EMBL" id="M35267">
    <property type="protein sequence ID" value="AAA34645.1"/>
    <property type="molecule type" value="Genomic_DNA"/>
</dbReference>
<dbReference type="EMBL" id="U18796">
    <property type="protein sequence ID" value="AAB64575.1"/>
    <property type="molecule type" value="Genomic_DNA"/>
</dbReference>
<dbReference type="EMBL" id="BK006939">
    <property type="protein sequence ID" value="DAA07694.1"/>
    <property type="molecule type" value="Genomic_DNA"/>
</dbReference>
<dbReference type="PIR" id="S50543">
    <property type="entry name" value="S50543"/>
</dbReference>
<dbReference type="RefSeq" id="NP_010958.3">
    <property type="nucleotide sequence ID" value="NM_001178931.3"/>
</dbReference>
<dbReference type="SMR" id="P18494"/>
<dbReference type="BioGRID" id="36776">
    <property type="interactions" value="431"/>
</dbReference>
<dbReference type="DIP" id="DIP-2353N"/>
<dbReference type="FunCoup" id="P18494">
    <property type="interactions" value="2175"/>
</dbReference>
<dbReference type="IntAct" id="P18494">
    <property type="interactions" value="13"/>
</dbReference>
<dbReference type="MINT" id="P18494"/>
<dbReference type="STRING" id="4932.YER040W"/>
<dbReference type="GlyGen" id="P18494">
    <property type="glycosylation" value="1 site, 1 O-linked glycan (1 site)"/>
</dbReference>
<dbReference type="iPTMnet" id="P18494"/>
<dbReference type="PaxDb" id="4932-YER040W"/>
<dbReference type="PeptideAtlas" id="P18494"/>
<dbReference type="EnsemblFungi" id="YER040W_mRNA">
    <property type="protein sequence ID" value="YER040W"/>
    <property type="gene ID" value="YER040W"/>
</dbReference>
<dbReference type="GeneID" id="856763"/>
<dbReference type="KEGG" id="sce:YER040W"/>
<dbReference type="AGR" id="SGD:S000000842"/>
<dbReference type="SGD" id="S000000842">
    <property type="gene designation" value="GLN3"/>
</dbReference>
<dbReference type="VEuPathDB" id="FungiDB:YER040W"/>
<dbReference type="eggNOG" id="KOG1601">
    <property type="taxonomic scope" value="Eukaryota"/>
</dbReference>
<dbReference type="HOGENOM" id="CLU_022036_0_0_1"/>
<dbReference type="InParanoid" id="P18494"/>
<dbReference type="OMA" id="IAQLWDF"/>
<dbReference type="OrthoDB" id="515401at2759"/>
<dbReference type="BioCyc" id="YEAST:G3O-30221-MONOMER"/>
<dbReference type="Reactome" id="R-SCE-9018519">
    <property type="pathway name" value="Estrogen-dependent gene expression"/>
</dbReference>
<dbReference type="BioGRID-ORCS" id="856763">
    <property type="hits" value="0 hits in 13 CRISPR screens"/>
</dbReference>
<dbReference type="PRO" id="PR:P18494"/>
<dbReference type="Proteomes" id="UP000002311">
    <property type="component" value="Chromosome V"/>
</dbReference>
<dbReference type="RNAct" id="P18494">
    <property type="molecule type" value="protein"/>
</dbReference>
<dbReference type="GO" id="GO:0005829">
    <property type="term" value="C:cytosol"/>
    <property type="evidence" value="ECO:0000314"/>
    <property type="project" value="SGD"/>
</dbReference>
<dbReference type="GO" id="GO:0005634">
    <property type="term" value="C:nucleus"/>
    <property type="evidence" value="ECO:0000314"/>
    <property type="project" value="SGD"/>
</dbReference>
<dbReference type="GO" id="GO:0003700">
    <property type="term" value="F:DNA-binding transcription factor activity"/>
    <property type="evidence" value="ECO:0000314"/>
    <property type="project" value="SGD"/>
</dbReference>
<dbReference type="GO" id="GO:0000981">
    <property type="term" value="F:DNA-binding transcription factor activity, RNA polymerase II-specific"/>
    <property type="evidence" value="ECO:0000318"/>
    <property type="project" value="GO_Central"/>
</dbReference>
<dbReference type="GO" id="GO:0000978">
    <property type="term" value="F:RNA polymerase II cis-regulatory region sequence-specific DNA binding"/>
    <property type="evidence" value="ECO:0000314"/>
    <property type="project" value="SGD"/>
</dbReference>
<dbReference type="GO" id="GO:0043565">
    <property type="term" value="F:sequence-specific DNA binding"/>
    <property type="evidence" value="ECO:0007005"/>
    <property type="project" value="SGD"/>
</dbReference>
<dbReference type="GO" id="GO:0008270">
    <property type="term" value="F:zinc ion binding"/>
    <property type="evidence" value="ECO:0007669"/>
    <property type="project" value="UniProtKB-KW"/>
</dbReference>
<dbReference type="GO" id="GO:0000122">
    <property type="term" value="P:negative regulation of transcription by RNA polymerase II"/>
    <property type="evidence" value="ECO:0000318"/>
    <property type="project" value="GO_Central"/>
</dbReference>
<dbReference type="GO" id="GO:0042128">
    <property type="term" value="P:nitrate assimilation"/>
    <property type="evidence" value="ECO:0007669"/>
    <property type="project" value="UniProtKB-KW"/>
</dbReference>
<dbReference type="GO" id="GO:0045944">
    <property type="term" value="P:positive regulation of transcription by RNA polymerase II"/>
    <property type="evidence" value="ECO:0000315"/>
    <property type="project" value="SGD"/>
</dbReference>
<dbReference type="CDD" id="cd00202">
    <property type="entry name" value="ZnF_GATA"/>
    <property type="match status" value="1"/>
</dbReference>
<dbReference type="FunFam" id="3.30.50.10:FF:000007">
    <property type="entry name" value="Nitrogen regulatory AreA, N-terminal"/>
    <property type="match status" value="1"/>
</dbReference>
<dbReference type="Gene3D" id="3.30.50.10">
    <property type="entry name" value="Erythroid Transcription Factor GATA-1, subunit A"/>
    <property type="match status" value="1"/>
</dbReference>
<dbReference type="InterPro" id="IPR039355">
    <property type="entry name" value="Transcription_factor_GATA"/>
</dbReference>
<dbReference type="InterPro" id="IPR000679">
    <property type="entry name" value="Znf_GATA"/>
</dbReference>
<dbReference type="InterPro" id="IPR013088">
    <property type="entry name" value="Znf_NHR/GATA"/>
</dbReference>
<dbReference type="PANTHER" id="PTHR10071:SF281">
    <property type="entry name" value="BOX A-BINDING FACTOR-RELATED"/>
    <property type="match status" value="1"/>
</dbReference>
<dbReference type="PANTHER" id="PTHR10071">
    <property type="entry name" value="TRANSCRIPTION FACTOR GATA FAMILY MEMBER"/>
    <property type="match status" value="1"/>
</dbReference>
<dbReference type="Pfam" id="PF00320">
    <property type="entry name" value="GATA"/>
    <property type="match status" value="1"/>
</dbReference>
<dbReference type="PRINTS" id="PR00619">
    <property type="entry name" value="GATAZNFINGER"/>
</dbReference>
<dbReference type="SMART" id="SM00401">
    <property type="entry name" value="ZnF_GATA"/>
    <property type="match status" value="1"/>
</dbReference>
<dbReference type="SUPFAM" id="SSF57716">
    <property type="entry name" value="Glucocorticoid receptor-like (DNA-binding domain)"/>
    <property type="match status" value="1"/>
</dbReference>
<dbReference type="PROSITE" id="PS00344">
    <property type="entry name" value="GATA_ZN_FINGER_1"/>
    <property type="match status" value="1"/>
</dbReference>
<dbReference type="PROSITE" id="PS50114">
    <property type="entry name" value="GATA_ZN_FINGER_2"/>
    <property type="match status" value="1"/>
</dbReference>
<reference key="1">
    <citation type="journal article" date="1991" name="Mol. Cell. Biol.">
        <title>Sequence and expression of GLN3, a positive nitrogen regulatory gene of Saccharomyces cerevisiae encoding a protein with a putative zinc finger DNA-binding domain.</title>
        <authorList>
            <person name="Minehart P.L."/>
            <person name="Magasanik B."/>
        </authorList>
    </citation>
    <scope>NUCLEOTIDE SEQUENCE [GENOMIC DNA]</scope>
</reference>
<reference key="2">
    <citation type="journal article" date="1997" name="Nature">
        <title>The nucleotide sequence of Saccharomyces cerevisiae chromosome V.</title>
        <authorList>
            <person name="Dietrich F.S."/>
            <person name="Mulligan J.T."/>
            <person name="Hennessy K.M."/>
            <person name="Yelton M.A."/>
            <person name="Allen E."/>
            <person name="Araujo R."/>
            <person name="Aviles E."/>
            <person name="Berno A."/>
            <person name="Brennan T."/>
            <person name="Carpenter J."/>
            <person name="Chen E."/>
            <person name="Cherry J.M."/>
            <person name="Chung E."/>
            <person name="Duncan M."/>
            <person name="Guzman E."/>
            <person name="Hartzell G."/>
            <person name="Hunicke-Smith S."/>
            <person name="Hyman R.W."/>
            <person name="Kayser A."/>
            <person name="Komp C."/>
            <person name="Lashkari D."/>
            <person name="Lew H."/>
            <person name="Lin D."/>
            <person name="Mosedale D."/>
            <person name="Nakahara K."/>
            <person name="Namath A."/>
            <person name="Norgren R."/>
            <person name="Oefner P."/>
            <person name="Oh C."/>
            <person name="Petel F.X."/>
            <person name="Roberts D."/>
            <person name="Sehl P."/>
            <person name="Schramm S."/>
            <person name="Shogren T."/>
            <person name="Smith V."/>
            <person name="Taylor P."/>
            <person name="Wei Y."/>
            <person name="Botstein D."/>
            <person name="Davis R.W."/>
        </authorList>
    </citation>
    <scope>NUCLEOTIDE SEQUENCE [LARGE SCALE GENOMIC DNA]</scope>
    <source>
        <strain>ATCC 204508 / S288c</strain>
    </source>
</reference>
<reference key="3">
    <citation type="journal article" date="2014" name="G3 (Bethesda)">
        <title>The reference genome sequence of Saccharomyces cerevisiae: Then and now.</title>
        <authorList>
            <person name="Engel S.R."/>
            <person name="Dietrich F.S."/>
            <person name="Fisk D.G."/>
            <person name="Binkley G."/>
            <person name="Balakrishnan R."/>
            <person name="Costanzo M.C."/>
            <person name="Dwight S.S."/>
            <person name="Hitz B.C."/>
            <person name="Karra K."/>
            <person name="Nash R.S."/>
            <person name="Weng S."/>
            <person name="Wong E.D."/>
            <person name="Lloyd P."/>
            <person name="Skrzypek M.S."/>
            <person name="Miyasato S.R."/>
            <person name="Simison M."/>
            <person name="Cherry J.M."/>
        </authorList>
    </citation>
    <scope>GENOME REANNOTATION</scope>
    <source>
        <strain>ATCC 204508 / S288c</strain>
    </source>
</reference>
<reference key="4">
    <citation type="journal article" date="2007" name="Genomics">
        <title>Nine-amino-acid transactivation domain: establishment and prediction utilities.</title>
        <authorList>
            <person name="Piskacek S."/>
            <person name="Gregor M."/>
            <person name="Nemethova M."/>
            <person name="Grabner M."/>
            <person name="Kovarik P."/>
            <person name="Piskacek M."/>
        </authorList>
    </citation>
    <scope>DOMAIN</scope>
</reference>
<reference key="5">
    <citation type="journal article" date="2003" name="Nature">
        <title>Global analysis of protein expression in yeast.</title>
        <authorList>
            <person name="Ghaemmaghami S."/>
            <person name="Huh W.-K."/>
            <person name="Bower K."/>
            <person name="Howson R.W."/>
            <person name="Belle A."/>
            <person name="Dephoure N."/>
            <person name="O'Shea E.K."/>
            <person name="Weissman J.S."/>
        </authorList>
    </citation>
    <scope>LEVEL OF PROTEIN EXPRESSION [LARGE SCALE ANALYSIS]</scope>
</reference>
<reference key="6">
    <citation type="journal article" date="2007" name="J. Proteome Res.">
        <title>Large-scale phosphorylation analysis of alpha-factor-arrested Saccharomyces cerevisiae.</title>
        <authorList>
            <person name="Li X."/>
            <person name="Gerber S.A."/>
            <person name="Rudner A.D."/>
            <person name="Beausoleil S.A."/>
            <person name="Haas W."/>
            <person name="Villen J."/>
            <person name="Elias J.E."/>
            <person name="Gygi S.P."/>
        </authorList>
    </citation>
    <scope>PHOSPHORYLATION [LARGE SCALE ANALYSIS] AT SER-562</scope>
    <scope>IDENTIFICATION BY MASS SPECTROMETRY [LARGE SCALE ANALYSIS]</scope>
    <source>
        <strain>ADR376</strain>
    </source>
</reference>
<reference key="7">
    <citation type="journal article" date="2008" name="Mol. Cell. Proteomics">
        <title>A multidimensional chromatography technology for in-depth phosphoproteome analysis.</title>
        <authorList>
            <person name="Albuquerque C.P."/>
            <person name="Smolka M.B."/>
            <person name="Payne S.H."/>
            <person name="Bafna V."/>
            <person name="Eng J."/>
            <person name="Zhou H."/>
        </authorList>
    </citation>
    <scope>PHOSPHORYLATION [LARGE SCALE ANALYSIS] AT SER-251; SER-469 AND SER-552</scope>
    <scope>IDENTIFICATION BY MASS SPECTROMETRY [LARGE SCALE ANALYSIS]</scope>
</reference>
<reference key="8">
    <citation type="journal article" date="2009" name="Science">
        <title>Global analysis of Cdk1 substrate phosphorylation sites provides insights into evolution.</title>
        <authorList>
            <person name="Holt L.J."/>
            <person name="Tuch B.B."/>
            <person name="Villen J."/>
            <person name="Johnson A.D."/>
            <person name="Gygi S.P."/>
            <person name="Morgan D.O."/>
        </authorList>
    </citation>
    <scope>PHOSPHORYLATION [LARGE SCALE ANALYSIS] AT SER-267; SER-285; SER-469; SER-552 AND SER-562</scope>
    <scope>IDENTIFICATION BY MASS SPECTROMETRY [LARGE SCALE ANALYSIS]</scope>
</reference>
<accession>P18494</accession>
<accession>D3DLU0</accession>
<comment type="function">
    <text>Positive nitrogen regulatory protein. Required for the activation of transcription of a number of genes (including the allantoin pathway genes) in response to the replacement of glutamine by glutamate as source of nitrogen. Binds the nitrogen upstream activation sequence of GLN1, the gene encoding glutamine synthetase. URE2 may catalytically inactivate GLN3 in response to an increase in the intracellular concentration of glutamine.</text>
</comment>
<comment type="interaction">
    <interactant intactId="EBI-7657">
        <id>P18494</id>
    </interactant>
    <interactant intactId="EBI-20138">
        <id>P23202</id>
        <label>URE2</label>
    </interactant>
    <organismsDiffer>false</organismsDiffer>
    <experiments>2</experiments>
</comment>
<comment type="subcellular location">
    <subcellularLocation>
        <location>Nucleus</location>
    </subcellularLocation>
</comment>
<comment type="domain">
    <text evidence="4">The 9aaTAD motif is a transactivation domain present in a large number of yeast and animal transcription factors.</text>
</comment>
<comment type="miscellaneous">
    <text evidence="3">Present with 589 molecules/cell in log phase SD medium.</text>
</comment>
<name>GLN3_YEAST</name>
<gene>
    <name type="primary">GLN3</name>
    <name type="ordered locus">YER040W</name>
</gene>
<feature type="chain" id="PRO_0000083477" description="Nitrogen regulatory protein GLN3">
    <location>
        <begin position="1"/>
        <end position="730"/>
    </location>
</feature>
<feature type="zinc finger region" description="GATA-type" evidence="1">
    <location>
        <begin position="306"/>
        <end position="330"/>
    </location>
</feature>
<feature type="region of interest" description="Disordered" evidence="2">
    <location>
        <begin position="1"/>
        <end position="45"/>
    </location>
</feature>
<feature type="region of interest" description="Disordered" evidence="2">
    <location>
        <begin position="187"/>
        <end position="208"/>
    </location>
</feature>
<feature type="region of interest" description="Disordered" evidence="2">
    <location>
        <begin position="224"/>
        <end position="262"/>
    </location>
</feature>
<feature type="region of interest" description="Disordered" evidence="2">
    <location>
        <begin position="355"/>
        <end position="398"/>
    </location>
</feature>
<feature type="region of interest" description="Disordered" evidence="2">
    <location>
        <begin position="449"/>
        <end position="516"/>
    </location>
</feature>
<feature type="region of interest" description="Disordered" evidence="2">
    <location>
        <begin position="593"/>
        <end position="673"/>
    </location>
</feature>
<feature type="region of interest" description="Disordered" evidence="2">
    <location>
        <begin position="696"/>
        <end position="717"/>
    </location>
</feature>
<feature type="short sequence motif" description="9aaTAD">
    <location>
        <begin position="129"/>
        <end position="137"/>
    </location>
</feature>
<feature type="compositionally biased region" description="Basic and acidic residues" evidence="2">
    <location>
        <begin position="18"/>
        <end position="32"/>
    </location>
</feature>
<feature type="compositionally biased region" description="Polar residues" evidence="2">
    <location>
        <begin position="33"/>
        <end position="43"/>
    </location>
</feature>
<feature type="compositionally biased region" description="Low complexity" evidence="2">
    <location>
        <begin position="224"/>
        <end position="240"/>
    </location>
</feature>
<feature type="compositionally biased region" description="Polar residues" evidence="2">
    <location>
        <begin position="252"/>
        <end position="262"/>
    </location>
</feature>
<feature type="compositionally biased region" description="Low complexity" evidence="2">
    <location>
        <begin position="370"/>
        <end position="384"/>
    </location>
</feature>
<feature type="compositionally biased region" description="Low complexity" evidence="2">
    <location>
        <begin position="449"/>
        <end position="470"/>
    </location>
</feature>
<feature type="compositionally biased region" description="Low complexity" evidence="2">
    <location>
        <begin position="482"/>
        <end position="499"/>
    </location>
</feature>
<feature type="compositionally biased region" description="Low complexity" evidence="2">
    <location>
        <begin position="596"/>
        <end position="631"/>
    </location>
</feature>
<feature type="compositionally biased region" description="Low complexity" evidence="2">
    <location>
        <begin position="641"/>
        <end position="651"/>
    </location>
</feature>
<feature type="compositionally biased region" description="Low complexity" evidence="2">
    <location>
        <begin position="658"/>
        <end position="672"/>
    </location>
</feature>
<feature type="modified residue" description="Phosphoserine" evidence="7">
    <location>
        <position position="251"/>
    </location>
</feature>
<feature type="modified residue" description="Phosphoserine" evidence="8">
    <location>
        <position position="267"/>
    </location>
</feature>
<feature type="modified residue" description="Phosphoserine" evidence="8">
    <location>
        <position position="285"/>
    </location>
</feature>
<feature type="modified residue" description="Phosphoserine" evidence="7 8">
    <location>
        <position position="469"/>
    </location>
</feature>
<feature type="modified residue" description="Phosphoserine" evidence="7 8">
    <location>
        <position position="552"/>
    </location>
</feature>
<feature type="modified residue" description="Phosphoserine" evidence="6 8">
    <location>
        <position position="562"/>
    </location>
</feature>
<feature type="sequence conflict" description="In Ref. 1; AAA34645." evidence="5" ref="1">
    <original>P</original>
    <variation>G</variation>
    <location>
        <position position="474"/>
    </location>
</feature>
<proteinExistence type="evidence at protein level"/>
<keyword id="KW-0010">Activator</keyword>
<keyword id="KW-0238">DNA-binding</keyword>
<keyword id="KW-0479">Metal-binding</keyword>
<keyword id="KW-0534">Nitrate assimilation</keyword>
<keyword id="KW-0539">Nucleus</keyword>
<keyword id="KW-0597">Phosphoprotein</keyword>
<keyword id="KW-1185">Reference proteome</keyword>
<keyword id="KW-0804">Transcription</keyword>
<keyword id="KW-0805">Transcription regulation</keyword>
<keyword id="KW-0862">Zinc</keyword>
<keyword id="KW-0863">Zinc-finger</keyword>
<sequence>MQDDPENSKLYDLLNSHLDVHGRSNEEPRQTGDSRSQSSGNTGENEEDIAFASGLNGGTFDSMLEALPDDLYFTDFVSPFTAAATTSVTTKTVKDTTPATNHMDDDIAMFDSLATTQPIDIAASNQQNGEIAQLWDFNVDQFNMTPSNSSGSATISAPNSFTSDIPQYNHGSLGNSVSKSSLFPYNSSTSNSNINQPSINNNSNTNAQSHHSFNIYKLQNNNSSSSAMNITNNNNSNNSNIQHPFLKKSDSIGLSSSNTTNSVRKNSLIKPMSSTSLANFKRAASVSSSISNMEPSGQNKKPLIQCFNCKTFKTPLWRRSPEGNTLCNACGLFQKLHGTMRPLSLKSDVIKKRISKKRAKQTDPNIAQNTPSAPATASTSVTTTNAKPIRSRKKSLQQNSLSRVIPEEIIRDNIGNTNNILNVNRGGYNFNSVPSPVLMNSQSYNSSNANFNGASNANLNSNNLMRHNSNTVTPNFRRSSRRSSTSSNTSSSSKSSSRSVVPILPKPSPNSANSQQFNMNMNLMNTTNNVSAGNSVASSPRIISSANFNSNSPLQQNLLSNSFQRQGMNIPRRKMSRNASYSSSFMAASLQQLHEQQQVDVNSNTNTNSNRQNWNSSNSVSTNSRSSNFVSQKPNFDIFNTPVDSPSVSRPSSRKSHTSLLSQQLQNSESNSFISNHKFNNRLSSDSTSPIKYEADVSAGGKISEDNSTKGSSKESSAIADELDWLKFGI</sequence>
<protein>
    <recommendedName>
        <fullName>Nitrogen regulatory protein GLN3</fullName>
    </recommendedName>
</protein>
<evidence type="ECO:0000255" key="1">
    <source>
        <dbReference type="PROSITE-ProRule" id="PRU00094"/>
    </source>
</evidence>
<evidence type="ECO:0000256" key="2">
    <source>
        <dbReference type="SAM" id="MobiDB-lite"/>
    </source>
</evidence>
<evidence type="ECO:0000269" key="3">
    <source>
    </source>
</evidence>
<evidence type="ECO:0000269" key="4">
    <source>
    </source>
</evidence>
<evidence type="ECO:0000305" key="5"/>
<evidence type="ECO:0007744" key="6">
    <source>
    </source>
</evidence>
<evidence type="ECO:0007744" key="7">
    <source>
    </source>
</evidence>
<evidence type="ECO:0007744" key="8">
    <source>
    </source>
</evidence>